<name>TIG_CUPPJ</name>
<organism>
    <name type="scientific">Cupriavidus pinatubonensis (strain JMP 134 / LMG 1197)</name>
    <name type="common">Cupriavidus necator (strain JMP 134)</name>
    <dbReference type="NCBI Taxonomy" id="264198"/>
    <lineage>
        <taxon>Bacteria</taxon>
        <taxon>Pseudomonadati</taxon>
        <taxon>Pseudomonadota</taxon>
        <taxon>Betaproteobacteria</taxon>
        <taxon>Burkholderiales</taxon>
        <taxon>Burkholderiaceae</taxon>
        <taxon>Cupriavidus</taxon>
    </lineage>
</organism>
<sequence>MSNVIENLGKLDRKVTLAIPKAEVEKEKQDRLVRLSKTVKMSGFRPGKVPMKMVEKQYGQQVEFEVRFDKAARKFFDITKEQDVKVAGQPKFEIKTEGVGEDEVAFDATFEVYPEVKLGDLTGAEVTRTKTEITDAEIDKTIDILRKQRVHYHVRGEAGEHGDGGGDVTAQNGDRVTLDFVGKIEGVEFAGGKAEDFPFVLGEGRMLPEFEAATLGLKVGESKSFPLSFPADYHGKDVAGKTAEFTVTLKKIEWAHLPEVNDAFAKSLGIADGNVDKMRADIRENLEREVKRRTHAMLKDQVMEALLKVSELDVPKALIEQDQERLVEMARRDLEQRGMPNAKDMPIPAEMFAQQAERRVKLGLILAEIVKAHGLEAKADQIKAEIEDFAKSYEDPKEVMRWYYGDQQRLAEMEAYVLENNVVNFVCDKAKVTDKSVSFEELTAEGNAQQA</sequence>
<keyword id="KW-0131">Cell cycle</keyword>
<keyword id="KW-0132">Cell division</keyword>
<keyword id="KW-0143">Chaperone</keyword>
<keyword id="KW-0963">Cytoplasm</keyword>
<keyword id="KW-0413">Isomerase</keyword>
<keyword id="KW-0697">Rotamase</keyword>
<gene>
    <name evidence="1" type="primary">tig</name>
    <name type="ordered locus">Reut_A1379</name>
</gene>
<comment type="function">
    <text evidence="1">Involved in protein export. Acts as a chaperone by maintaining the newly synthesized protein in an open conformation. Functions as a peptidyl-prolyl cis-trans isomerase.</text>
</comment>
<comment type="catalytic activity">
    <reaction evidence="1">
        <text>[protein]-peptidylproline (omega=180) = [protein]-peptidylproline (omega=0)</text>
        <dbReference type="Rhea" id="RHEA:16237"/>
        <dbReference type="Rhea" id="RHEA-COMP:10747"/>
        <dbReference type="Rhea" id="RHEA-COMP:10748"/>
        <dbReference type="ChEBI" id="CHEBI:83833"/>
        <dbReference type="ChEBI" id="CHEBI:83834"/>
        <dbReference type="EC" id="5.2.1.8"/>
    </reaction>
</comment>
<comment type="subcellular location">
    <subcellularLocation>
        <location>Cytoplasm</location>
    </subcellularLocation>
    <text evidence="1">About half TF is bound to the ribosome near the polypeptide exit tunnel while the other half is free in the cytoplasm.</text>
</comment>
<comment type="domain">
    <text evidence="1">Consists of 3 domains; the N-terminus binds the ribosome, the middle domain has PPIase activity, while the C-terminus has intrinsic chaperone activity on its own.</text>
</comment>
<comment type="similarity">
    <text evidence="1">Belongs to the FKBP-type PPIase family. Tig subfamily.</text>
</comment>
<proteinExistence type="inferred from homology"/>
<accession>Q472D4</accession>
<feature type="chain" id="PRO_0000256598" description="Trigger factor">
    <location>
        <begin position="1"/>
        <end position="451"/>
    </location>
</feature>
<feature type="domain" description="PPIase FKBP-type" evidence="1">
    <location>
        <begin position="173"/>
        <end position="258"/>
    </location>
</feature>
<protein>
    <recommendedName>
        <fullName evidence="1">Trigger factor</fullName>
        <shortName evidence="1">TF</shortName>
        <ecNumber evidence="1">5.2.1.8</ecNumber>
    </recommendedName>
    <alternativeName>
        <fullName evidence="1">PPIase</fullName>
    </alternativeName>
</protein>
<dbReference type="EC" id="5.2.1.8" evidence="1"/>
<dbReference type="EMBL" id="CP000090">
    <property type="protein sequence ID" value="AAZ60749.1"/>
    <property type="molecule type" value="Genomic_DNA"/>
</dbReference>
<dbReference type="SMR" id="Q472D4"/>
<dbReference type="STRING" id="264198.Reut_A1379"/>
<dbReference type="KEGG" id="reu:Reut_A1379"/>
<dbReference type="eggNOG" id="COG0544">
    <property type="taxonomic scope" value="Bacteria"/>
</dbReference>
<dbReference type="HOGENOM" id="CLU_033058_2_0_4"/>
<dbReference type="OrthoDB" id="9767721at2"/>
<dbReference type="GO" id="GO:0005737">
    <property type="term" value="C:cytoplasm"/>
    <property type="evidence" value="ECO:0007669"/>
    <property type="project" value="UniProtKB-SubCell"/>
</dbReference>
<dbReference type="GO" id="GO:0003755">
    <property type="term" value="F:peptidyl-prolyl cis-trans isomerase activity"/>
    <property type="evidence" value="ECO:0007669"/>
    <property type="project" value="UniProtKB-UniRule"/>
</dbReference>
<dbReference type="GO" id="GO:0044183">
    <property type="term" value="F:protein folding chaperone"/>
    <property type="evidence" value="ECO:0007669"/>
    <property type="project" value="TreeGrafter"/>
</dbReference>
<dbReference type="GO" id="GO:0043022">
    <property type="term" value="F:ribosome binding"/>
    <property type="evidence" value="ECO:0007669"/>
    <property type="project" value="TreeGrafter"/>
</dbReference>
<dbReference type="GO" id="GO:0051083">
    <property type="term" value="P:'de novo' cotranslational protein folding"/>
    <property type="evidence" value="ECO:0007669"/>
    <property type="project" value="TreeGrafter"/>
</dbReference>
<dbReference type="GO" id="GO:0051301">
    <property type="term" value="P:cell division"/>
    <property type="evidence" value="ECO:0007669"/>
    <property type="project" value="UniProtKB-KW"/>
</dbReference>
<dbReference type="GO" id="GO:0061077">
    <property type="term" value="P:chaperone-mediated protein folding"/>
    <property type="evidence" value="ECO:0007669"/>
    <property type="project" value="TreeGrafter"/>
</dbReference>
<dbReference type="GO" id="GO:0015031">
    <property type="term" value="P:protein transport"/>
    <property type="evidence" value="ECO:0007669"/>
    <property type="project" value="UniProtKB-UniRule"/>
</dbReference>
<dbReference type="GO" id="GO:0043335">
    <property type="term" value="P:protein unfolding"/>
    <property type="evidence" value="ECO:0007669"/>
    <property type="project" value="TreeGrafter"/>
</dbReference>
<dbReference type="FunFam" id="3.10.50.40:FF:000001">
    <property type="entry name" value="Trigger factor"/>
    <property type="match status" value="1"/>
</dbReference>
<dbReference type="Gene3D" id="3.10.50.40">
    <property type="match status" value="1"/>
</dbReference>
<dbReference type="Gene3D" id="3.30.70.1050">
    <property type="entry name" value="Trigger factor ribosome-binding domain"/>
    <property type="match status" value="1"/>
</dbReference>
<dbReference type="Gene3D" id="1.10.3120.10">
    <property type="entry name" value="Trigger factor, C-terminal domain"/>
    <property type="match status" value="1"/>
</dbReference>
<dbReference type="HAMAP" id="MF_00303">
    <property type="entry name" value="Trigger_factor_Tig"/>
    <property type="match status" value="1"/>
</dbReference>
<dbReference type="InterPro" id="IPR046357">
    <property type="entry name" value="PPIase_dom_sf"/>
</dbReference>
<dbReference type="InterPro" id="IPR001179">
    <property type="entry name" value="PPIase_FKBP_dom"/>
</dbReference>
<dbReference type="InterPro" id="IPR005215">
    <property type="entry name" value="Trig_fac"/>
</dbReference>
<dbReference type="InterPro" id="IPR008880">
    <property type="entry name" value="Trigger_fac_C"/>
</dbReference>
<dbReference type="InterPro" id="IPR037041">
    <property type="entry name" value="Trigger_fac_C_sf"/>
</dbReference>
<dbReference type="InterPro" id="IPR008881">
    <property type="entry name" value="Trigger_fac_ribosome-bd_bac"/>
</dbReference>
<dbReference type="InterPro" id="IPR036611">
    <property type="entry name" value="Trigger_fac_ribosome-bd_sf"/>
</dbReference>
<dbReference type="InterPro" id="IPR027304">
    <property type="entry name" value="Trigger_fact/SurA_dom_sf"/>
</dbReference>
<dbReference type="NCBIfam" id="TIGR00115">
    <property type="entry name" value="tig"/>
    <property type="match status" value="1"/>
</dbReference>
<dbReference type="PANTHER" id="PTHR30560">
    <property type="entry name" value="TRIGGER FACTOR CHAPERONE AND PEPTIDYL-PROLYL CIS/TRANS ISOMERASE"/>
    <property type="match status" value="1"/>
</dbReference>
<dbReference type="PANTHER" id="PTHR30560:SF3">
    <property type="entry name" value="TRIGGER FACTOR-LIKE PROTEIN TIG, CHLOROPLASTIC"/>
    <property type="match status" value="1"/>
</dbReference>
<dbReference type="Pfam" id="PF00254">
    <property type="entry name" value="FKBP_C"/>
    <property type="match status" value="1"/>
</dbReference>
<dbReference type="Pfam" id="PF05698">
    <property type="entry name" value="Trigger_C"/>
    <property type="match status" value="1"/>
</dbReference>
<dbReference type="Pfam" id="PF05697">
    <property type="entry name" value="Trigger_N"/>
    <property type="match status" value="1"/>
</dbReference>
<dbReference type="PIRSF" id="PIRSF003095">
    <property type="entry name" value="Trigger_factor"/>
    <property type="match status" value="1"/>
</dbReference>
<dbReference type="SUPFAM" id="SSF54534">
    <property type="entry name" value="FKBP-like"/>
    <property type="match status" value="1"/>
</dbReference>
<dbReference type="SUPFAM" id="SSF109998">
    <property type="entry name" value="Triger factor/SurA peptide-binding domain-like"/>
    <property type="match status" value="1"/>
</dbReference>
<dbReference type="SUPFAM" id="SSF102735">
    <property type="entry name" value="Trigger factor ribosome-binding domain"/>
    <property type="match status" value="1"/>
</dbReference>
<dbReference type="PROSITE" id="PS50059">
    <property type="entry name" value="FKBP_PPIASE"/>
    <property type="match status" value="1"/>
</dbReference>
<reference key="1">
    <citation type="journal article" date="2010" name="PLoS ONE">
        <title>The complete multipartite genome sequence of Cupriavidus necator JMP134, a versatile pollutant degrader.</title>
        <authorList>
            <person name="Lykidis A."/>
            <person name="Perez-Pantoja D."/>
            <person name="Ledger T."/>
            <person name="Mavromatis K."/>
            <person name="Anderson I.J."/>
            <person name="Ivanova N.N."/>
            <person name="Hooper S.D."/>
            <person name="Lapidus A."/>
            <person name="Lucas S."/>
            <person name="Gonzalez B."/>
            <person name="Kyrpides N.C."/>
        </authorList>
    </citation>
    <scope>NUCLEOTIDE SEQUENCE [LARGE SCALE GENOMIC DNA]</scope>
    <source>
        <strain>JMP134 / LMG 1197</strain>
    </source>
</reference>
<evidence type="ECO:0000255" key="1">
    <source>
        <dbReference type="HAMAP-Rule" id="MF_00303"/>
    </source>
</evidence>